<comment type="function">
    <text evidence="1">Catalyzes the conversion of S-adenosyl-L-methionine (SAM) to carboxy-S-adenosyl-L-methionine (Cx-SAM).</text>
</comment>
<comment type="catalytic activity">
    <reaction evidence="1">
        <text>prephenate + S-adenosyl-L-methionine = carboxy-S-adenosyl-L-methionine + 3-phenylpyruvate + H2O</text>
        <dbReference type="Rhea" id="RHEA:51692"/>
        <dbReference type="ChEBI" id="CHEBI:15377"/>
        <dbReference type="ChEBI" id="CHEBI:18005"/>
        <dbReference type="ChEBI" id="CHEBI:29934"/>
        <dbReference type="ChEBI" id="CHEBI:59789"/>
        <dbReference type="ChEBI" id="CHEBI:134278"/>
    </reaction>
</comment>
<comment type="subunit">
    <text evidence="1">Homodimer.</text>
</comment>
<comment type="similarity">
    <text evidence="1">Belongs to the class I-like SAM-binding methyltransferase superfamily. Cx-SAM synthase family.</text>
</comment>
<keyword id="KW-1185">Reference proteome</keyword>
<keyword id="KW-0949">S-adenosyl-L-methionine</keyword>
<keyword id="KW-0808">Transferase</keyword>
<sequence>MRSAMNPKDTLFSAPIDKIGDFTFDERVAEVFPDMIQRSVPGYSNIISAIGMLAERFVKPHSKIYDLGCSLGAATLSMRRHIKQEGCQIIAVDNSAAMVERCKLHLNAYRSDTPVQVIEADIRDIAIENASVVVLNFTLQFLAPDDRYALLEKIYAGLRPGGILILSEKFVFSDQEAHELLIDLHHDFKRANGYSELEISQKRSAIENVMRPDSIQTHKQRFATLGFSSFEVWFQCFNFGSMFAIK</sequence>
<name>CMOA_VIBCH</name>
<feature type="chain" id="PRO_0000314398" description="Carboxy-S-adenosyl-L-methionine synthase">
    <location>
        <begin position="1"/>
        <end position="246"/>
    </location>
</feature>
<feature type="binding site" evidence="1">
    <location>
        <position position="43"/>
    </location>
    <ligand>
        <name>S-adenosyl-L-methionine</name>
        <dbReference type="ChEBI" id="CHEBI:59789"/>
    </ligand>
</feature>
<feature type="binding site" evidence="1">
    <location>
        <begin position="68"/>
        <end position="70"/>
    </location>
    <ligand>
        <name>S-adenosyl-L-methionine</name>
        <dbReference type="ChEBI" id="CHEBI:59789"/>
    </ligand>
</feature>
<feature type="binding site" evidence="1">
    <location>
        <begin position="93"/>
        <end position="94"/>
    </location>
    <ligand>
        <name>S-adenosyl-L-methionine</name>
        <dbReference type="ChEBI" id="CHEBI:59789"/>
    </ligand>
</feature>
<feature type="binding site" evidence="1">
    <location>
        <begin position="121"/>
        <end position="122"/>
    </location>
    <ligand>
        <name>S-adenosyl-L-methionine</name>
        <dbReference type="ChEBI" id="CHEBI:59789"/>
    </ligand>
</feature>
<feature type="binding site" evidence="1">
    <location>
        <position position="136"/>
    </location>
    <ligand>
        <name>S-adenosyl-L-methionine</name>
        <dbReference type="ChEBI" id="CHEBI:59789"/>
    </ligand>
</feature>
<feature type="binding site" evidence="1">
    <location>
        <position position="203"/>
    </location>
    <ligand>
        <name>S-adenosyl-L-methionine</name>
        <dbReference type="ChEBI" id="CHEBI:59789"/>
    </ligand>
</feature>
<evidence type="ECO:0000255" key="1">
    <source>
        <dbReference type="HAMAP-Rule" id="MF_01589"/>
    </source>
</evidence>
<accession>Q9KSU2</accession>
<proteinExistence type="inferred from homology"/>
<gene>
    <name evidence="1" type="primary">cmoA</name>
    <name type="ordered locus">VC_1164</name>
</gene>
<protein>
    <recommendedName>
        <fullName evidence="1">Carboxy-S-adenosyl-L-methionine synthase</fullName>
        <shortName evidence="1">Cx-SAM synthase</shortName>
        <ecNumber evidence="1">2.1.3.-</ecNumber>
    </recommendedName>
</protein>
<organism>
    <name type="scientific">Vibrio cholerae serotype O1 (strain ATCC 39315 / El Tor Inaba N16961)</name>
    <dbReference type="NCBI Taxonomy" id="243277"/>
    <lineage>
        <taxon>Bacteria</taxon>
        <taxon>Pseudomonadati</taxon>
        <taxon>Pseudomonadota</taxon>
        <taxon>Gammaproteobacteria</taxon>
        <taxon>Vibrionales</taxon>
        <taxon>Vibrionaceae</taxon>
        <taxon>Vibrio</taxon>
    </lineage>
</organism>
<reference key="1">
    <citation type="journal article" date="2000" name="Nature">
        <title>DNA sequence of both chromosomes of the cholera pathogen Vibrio cholerae.</title>
        <authorList>
            <person name="Heidelberg J.F."/>
            <person name="Eisen J.A."/>
            <person name="Nelson W.C."/>
            <person name="Clayton R.A."/>
            <person name="Gwinn M.L."/>
            <person name="Dodson R.J."/>
            <person name="Haft D.H."/>
            <person name="Hickey E.K."/>
            <person name="Peterson J.D."/>
            <person name="Umayam L.A."/>
            <person name="Gill S.R."/>
            <person name="Nelson K.E."/>
            <person name="Read T.D."/>
            <person name="Tettelin H."/>
            <person name="Richardson D.L."/>
            <person name="Ermolaeva M.D."/>
            <person name="Vamathevan J.J."/>
            <person name="Bass S."/>
            <person name="Qin H."/>
            <person name="Dragoi I."/>
            <person name="Sellers P."/>
            <person name="McDonald L.A."/>
            <person name="Utterback T.R."/>
            <person name="Fleischmann R.D."/>
            <person name="Nierman W.C."/>
            <person name="White O."/>
            <person name="Salzberg S.L."/>
            <person name="Smith H.O."/>
            <person name="Colwell R.R."/>
            <person name="Mekalanos J.J."/>
            <person name="Venter J.C."/>
            <person name="Fraser C.M."/>
        </authorList>
    </citation>
    <scope>NUCLEOTIDE SEQUENCE [LARGE SCALE GENOMIC DNA]</scope>
    <source>
        <strain>ATCC 39315 / El Tor Inaba N16961</strain>
    </source>
</reference>
<dbReference type="EC" id="2.1.3.-" evidence="1"/>
<dbReference type="EMBL" id="AE003852">
    <property type="protein sequence ID" value="AAF94323.1"/>
    <property type="molecule type" value="Genomic_DNA"/>
</dbReference>
<dbReference type="PIR" id="D82234">
    <property type="entry name" value="D82234"/>
</dbReference>
<dbReference type="RefSeq" id="NP_230809.1">
    <property type="nucleotide sequence ID" value="NC_002505.1"/>
</dbReference>
<dbReference type="SMR" id="Q9KSU2"/>
<dbReference type="STRING" id="243277.VC_1164"/>
<dbReference type="DNASU" id="2614597"/>
<dbReference type="EnsemblBacteria" id="AAF94323">
    <property type="protein sequence ID" value="AAF94323"/>
    <property type="gene ID" value="VC_1164"/>
</dbReference>
<dbReference type="KEGG" id="vch:VC_1164"/>
<dbReference type="PATRIC" id="fig|243277.26.peg.1113"/>
<dbReference type="eggNOG" id="COG4106">
    <property type="taxonomic scope" value="Bacteria"/>
</dbReference>
<dbReference type="HOGENOM" id="CLU_078475_0_0_6"/>
<dbReference type="Proteomes" id="UP000000584">
    <property type="component" value="Chromosome 1"/>
</dbReference>
<dbReference type="GO" id="GO:0016743">
    <property type="term" value="F:carboxyl- or carbamoyltransferase activity"/>
    <property type="evidence" value="ECO:0007669"/>
    <property type="project" value="UniProtKB-UniRule"/>
</dbReference>
<dbReference type="GO" id="GO:1904047">
    <property type="term" value="F:S-adenosyl-L-methionine binding"/>
    <property type="evidence" value="ECO:0007669"/>
    <property type="project" value="UniProtKB-UniRule"/>
</dbReference>
<dbReference type="GO" id="GO:0002098">
    <property type="term" value="P:tRNA wobble uridine modification"/>
    <property type="evidence" value="ECO:0007669"/>
    <property type="project" value="InterPro"/>
</dbReference>
<dbReference type="CDD" id="cd02440">
    <property type="entry name" value="AdoMet_MTases"/>
    <property type="match status" value="1"/>
</dbReference>
<dbReference type="Gene3D" id="3.40.50.150">
    <property type="entry name" value="Vaccinia Virus protein VP39"/>
    <property type="match status" value="1"/>
</dbReference>
<dbReference type="HAMAP" id="MF_01589">
    <property type="entry name" value="Cx_SAM_synthase"/>
    <property type="match status" value="1"/>
</dbReference>
<dbReference type="InterPro" id="IPR005271">
    <property type="entry name" value="CmoA"/>
</dbReference>
<dbReference type="InterPro" id="IPR041698">
    <property type="entry name" value="Methyltransf_25"/>
</dbReference>
<dbReference type="InterPro" id="IPR029063">
    <property type="entry name" value="SAM-dependent_MTases_sf"/>
</dbReference>
<dbReference type="NCBIfam" id="TIGR00740">
    <property type="entry name" value="carboxy-S-adenosyl-L-methionine synthase CmoA"/>
    <property type="match status" value="1"/>
</dbReference>
<dbReference type="NCBIfam" id="NF011995">
    <property type="entry name" value="PRK15451.1"/>
    <property type="match status" value="1"/>
</dbReference>
<dbReference type="PANTHER" id="PTHR43861:SF2">
    <property type="entry name" value="CARBOXY-S-ADENOSYL-L-METHIONINE SYNTHASE"/>
    <property type="match status" value="1"/>
</dbReference>
<dbReference type="PANTHER" id="PTHR43861">
    <property type="entry name" value="TRANS-ACONITATE 2-METHYLTRANSFERASE-RELATED"/>
    <property type="match status" value="1"/>
</dbReference>
<dbReference type="Pfam" id="PF13649">
    <property type="entry name" value="Methyltransf_25"/>
    <property type="match status" value="1"/>
</dbReference>
<dbReference type="PIRSF" id="PIRSF006325">
    <property type="entry name" value="MeTrfase_bac"/>
    <property type="match status" value="1"/>
</dbReference>
<dbReference type="SUPFAM" id="SSF53335">
    <property type="entry name" value="S-adenosyl-L-methionine-dependent methyltransferases"/>
    <property type="match status" value="1"/>
</dbReference>